<proteinExistence type="inferred from homology"/>
<protein>
    <recommendedName>
        <fullName evidence="1">Proteasome subunit alpha</fullName>
    </recommendedName>
    <alternativeName>
        <fullName evidence="1">20S proteasome alpha subunit</fullName>
    </alternativeName>
    <alternativeName>
        <fullName evidence="1">Proteasome core protein PrcA</fullName>
    </alternativeName>
</protein>
<evidence type="ECO:0000255" key="1">
    <source>
        <dbReference type="HAMAP-Rule" id="MF_00289"/>
    </source>
</evidence>
<evidence type="ECO:0000256" key="2">
    <source>
        <dbReference type="SAM" id="MobiDB-lite"/>
    </source>
</evidence>
<keyword id="KW-0963">Cytoplasm</keyword>
<keyword id="KW-0647">Proteasome</keyword>
<keyword id="KW-1185">Reference proteome</keyword>
<gene>
    <name evidence="1" type="primary">prcA</name>
    <name type="ordered locus">Noca_2646</name>
</gene>
<dbReference type="EMBL" id="CP000509">
    <property type="protein sequence ID" value="ABL82149.1"/>
    <property type="molecule type" value="Genomic_DNA"/>
</dbReference>
<dbReference type="RefSeq" id="WP_011756089.1">
    <property type="nucleotide sequence ID" value="NC_008699.1"/>
</dbReference>
<dbReference type="SMR" id="A1SK14"/>
<dbReference type="STRING" id="196162.Noca_2646"/>
<dbReference type="MEROPS" id="T01.980"/>
<dbReference type="KEGG" id="nca:Noca_2646"/>
<dbReference type="eggNOG" id="COG0638">
    <property type="taxonomic scope" value="Bacteria"/>
</dbReference>
<dbReference type="HOGENOM" id="CLU_071031_0_0_11"/>
<dbReference type="OrthoDB" id="9775643at2"/>
<dbReference type="UniPathway" id="UPA00997"/>
<dbReference type="Proteomes" id="UP000000640">
    <property type="component" value="Chromosome"/>
</dbReference>
<dbReference type="GO" id="GO:0005737">
    <property type="term" value="C:cytoplasm"/>
    <property type="evidence" value="ECO:0007669"/>
    <property type="project" value="UniProtKB-SubCell"/>
</dbReference>
<dbReference type="GO" id="GO:0019773">
    <property type="term" value="C:proteasome core complex, alpha-subunit complex"/>
    <property type="evidence" value="ECO:0007669"/>
    <property type="project" value="UniProtKB-UniRule"/>
</dbReference>
<dbReference type="GO" id="GO:0004298">
    <property type="term" value="F:threonine-type endopeptidase activity"/>
    <property type="evidence" value="ECO:0007669"/>
    <property type="project" value="InterPro"/>
</dbReference>
<dbReference type="GO" id="GO:0019941">
    <property type="term" value="P:modification-dependent protein catabolic process"/>
    <property type="evidence" value="ECO:0007669"/>
    <property type="project" value="UniProtKB-UniRule"/>
</dbReference>
<dbReference type="GO" id="GO:0010498">
    <property type="term" value="P:proteasomal protein catabolic process"/>
    <property type="evidence" value="ECO:0007669"/>
    <property type="project" value="UniProtKB-UniRule"/>
</dbReference>
<dbReference type="CDD" id="cd01906">
    <property type="entry name" value="proteasome_protease_HslV"/>
    <property type="match status" value="1"/>
</dbReference>
<dbReference type="Gene3D" id="3.60.20.10">
    <property type="entry name" value="Glutamine Phosphoribosylpyrophosphate, subunit 1, domain 1"/>
    <property type="match status" value="1"/>
</dbReference>
<dbReference type="HAMAP" id="MF_00289_B">
    <property type="entry name" value="Proteasome_A_B"/>
    <property type="match status" value="1"/>
</dbReference>
<dbReference type="InterPro" id="IPR029055">
    <property type="entry name" value="Ntn_hydrolases_N"/>
</dbReference>
<dbReference type="InterPro" id="IPR050115">
    <property type="entry name" value="Proteasome_alpha"/>
</dbReference>
<dbReference type="InterPro" id="IPR023332">
    <property type="entry name" value="Proteasome_alpha-type"/>
</dbReference>
<dbReference type="InterPro" id="IPR022296">
    <property type="entry name" value="Proteasome_asu_bac"/>
</dbReference>
<dbReference type="InterPro" id="IPR001353">
    <property type="entry name" value="Proteasome_sua/b"/>
</dbReference>
<dbReference type="NCBIfam" id="TIGR03691">
    <property type="entry name" value="20S_bact_alpha"/>
    <property type="match status" value="1"/>
</dbReference>
<dbReference type="PANTHER" id="PTHR11599">
    <property type="entry name" value="PROTEASOME SUBUNIT ALPHA/BETA"/>
    <property type="match status" value="1"/>
</dbReference>
<dbReference type="Pfam" id="PF00227">
    <property type="entry name" value="Proteasome"/>
    <property type="match status" value="1"/>
</dbReference>
<dbReference type="SUPFAM" id="SSF56235">
    <property type="entry name" value="N-terminal nucleophile aminohydrolases (Ntn hydrolases)"/>
    <property type="match status" value="1"/>
</dbReference>
<dbReference type="PROSITE" id="PS51475">
    <property type="entry name" value="PROTEASOME_ALPHA_2"/>
    <property type="match status" value="1"/>
</dbReference>
<reference key="1">
    <citation type="submission" date="2006-12" db="EMBL/GenBank/DDBJ databases">
        <title>Complete sequence of chromosome 1 of Nocardioides sp. JS614.</title>
        <authorList>
            <person name="Copeland A."/>
            <person name="Lucas S."/>
            <person name="Lapidus A."/>
            <person name="Barry K."/>
            <person name="Detter J.C."/>
            <person name="Glavina del Rio T."/>
            <person name="Hammon N."/>
            <person name="Israni S."/>
            <person name="Dalin E."/>
            <person name="Tice H."/>
            <person name="Pitluck S."/>
            <person name="Thompson L.S."/>
            <person name="Brettin T."/>
            <person name="Bruce D."/>
            <person name="Han C."/>
            <person name="Tapia R."/>
            <person name="Schmutz J."/>
            <person name="Larimer F."/>
            <person name="Land M."/>
            <person name="Hauser L."/>
            <person name="Kyrpides N."/>
            <person name="Kim E."/>
            <person name="Mattes T."/>
            <person name="Gossett J."/>
            <person name="Richardson P."/>
        </authorList>
    </citation>
    <scope>NUCLEOTIDE SEQUENCE [LARGE SCALE GENOMIC DNA]</scope>
    <source>
        <strain>ATCC BAA-499 / JS614</strain>
    </source>
</reference>
<name>PSA_NOCSJ</name>
<comment type="function">
    <text evidence="1">Component of the proteasome core, a large protease complex with broad specificity involved in protein degradation.</text>
</comment>
<comment type="activity regulation">
    <text evidence="1">The formation of the proteasomal ATPase ARC-20S proteasome complex, likely via the docking of the C-termini of ARC into the intersubunit pockets in the alpha-rings, may trigger opening of the gate for substrate entry. Interconversion between the open-gate and close-gate conformations leads to a dynamic regulation of the 20S proteasome proteolysis activity.</text>
</comment>
<comment type="pathway">
    <text evidence="1">Protein degradation; proteasomal Pup-dependent pathway.</text>
</comment>
<comment type="subunit">
    <text evidence="1">The 20S proteasome core is composed of 14 alpha and 14 beta subunits that assemble into four stacked heptameric rings, resulting in a barrel-shaped structure. The two inner rings, each composed of seven catalytic beta subunits, are sandwiched by two outer rings, each composed of seven alpha subunits. The catalytic chamber with the active sites is on the inside of the barrel. Has a gated structure, the ends of the cylinder being occluded by the N-termini of the alpha-subunits. Is capped by the proteasome-associated ATPase, ARC.</text>
</comment>
<comment type="subcellular location">
    <subcellularLocation>
        <location evidence="1">Cytoplasm</location>
    </subcellularLocation>
</comment>
<comment type="similarity">
    <text evidence="1">Belongs to the peptidase T1A family.</text>
</comment>
<sequence length="255" mass="27835">MSMPFYVSPEQLMKDRADFARKGIARGRSVAAVQYADGILFVSENPSQALHKVSEIYDRIAFAAVGRYNEFENLRIAGVRLADMRGYAYDRRDVTGRGLANAYAQTLGTIFSSGGEKPYEVELFVAEIGDEAAGDQLYRLTYDGQVADEHGFAVMGGAADTVASYLKERYAEGASLTDAVRLAVASLGHTDTEDRVIPADDLEVAVLDRTRSQPRKFARLRPARLEELLGERGPAQHAPEEPADPEPEPPIAPPG</sequence>
<organism>
    <name type="scientific">Nocardioides sp. (strain ATCC BAA-499 / JS614)</name>
    <dbReference type="NCBI Taxonomy" id="196162"/>
    <lineage>
        <taxon>Bacteria</taxon>
        <taxon>Bacillati</taxon>
        <taxon>Actinomycetota</taxon>
        <taxon>Actinomycetes</taxon>
        <taxon>Propionibacteriales</taxon>
        <taxon>Nocardioidaceae</taxon>
        <taxon>Nocardioides</taxon>
    </lineage>
</organism>
<feature type="chain" id="PRO_0000397165" description="Proteasome subunit alpha">
    <location>
        <begin position="1"/>
        <end position="255"/>
    </location>
</feature>
<feature type="region of interest" description="Disordered" evidence="2">
    <location>
        <begin position="224"/>
        <end position="255"/>
    </location>
</feature>
<accession>A1SK14</accession>